<name>YQGF_STAA3</name>
<reference key="1">
    <citation type="journal article" date="2006" name="Lancet">
        <title>Complete genome sequence of USA300, an epidemic clone of community-acquired meticillin-resistant Staphylococcus aureus.</title>
        <authorList>
            <person name="Diep B.A."/>
            <person name="Gill S.R."/>
            <person name="Chang R.F."/>
            <person name="Phan T.H."/>
            <person name="Chen J.H."/>
            <person name="Davidson M.G."/>
            <person name="Lin F."/>
            <person name="Lin J."/>
            <person name="Carleton H.A."/>
            <person name="Mongodin E.F."/>
            <person name="Sensabaugh G.F."/>
            <person name="Perdreau-Remington F."/>
        </authorList>
    </citation>
    <scope>NUCLEOTIDE SEQUENCE [LARGE SCALE GENOMIC DNA]</scope>
    <source>
        <strain>USA300</strain>
    </source>
</reference>
<feature type="chain" id="PRO_0000257596" description="Putative pre-16S rRNA nuclease">
    <location>
        <begin position="1"/>
        <end position="142"/>
    </location>
</feature>
<accession>Q2FGB0</accession>
<organism>
    <name type="scientific">Staphylococcus aureus (strain USA300)</name>
    <dbReference type="NCBI Taxonomy" id="367830"/>
    <lineage>
        <taxon>Bacteria</taxon>
        <taxon>Bacillati</taxon>
        <taxon>Bacillota</taxon>
        <taxon>Bacilli</taxon>
        <taxon>Bacillales</taxon>
        <taxon>Staphylococcaceae</taxon>
        <taxon>Staphylococcus</taxon>
    </lineage>
</organism>
<keyword id="KW-0963">Cytoplasm</keyword>
<keyword id="KW-0378">Hydrolase</keyword>
<keyword id="KW-0540">Nuclease</keyword>
<keyword id="KW-0690">Ribosome biogenesis</keyword>
<proteinExistence type="inferred from homology"/>
<gene>
    <name type="ordered locus">SAUSA300_1573</name>
</gene>
<protein>
    <recommendedName>
        <fullName evidence="1">Putative pre-16S rRNA nuclease</fullName>
        <ecNumber evidence="1">3.1.-.-</ecNumber>
    </recommendedName>
</protein>
<sequence>MLQHKILGLDVGSRTVGIAISDIMGWTAQGLDTLRINEENNELGIDQLVDIIKKHNVGTVVIGLPKNMNNSIGFRGEASLTYKEKLLEAYPSIEIVMWDERLSTMAAERSLLEADVSRQKRKQVIDKMAAVFILQGYLDSLH</sequence>
<evidence type="ECO:0000255" key="1">
    <source>
        <dbReference type="HAMAP-Rule" id="MF_00651"/>
    </source>
</evidence>
<dbReference type="EC" id="3.1.-.-" evidence="1"/>
<dbReference type="EMBL" id="CP000255">
    <property type="protein sequence ID" value="ABD20593.1"/>
    <property type="molecule type" value="Genomic_DNA"/>
</dbReference>
<dbReference type="SMR" id="Q2FGB0"/>
<dbReference type="KEGG" id="saa:SAUSA300_1573"/>
<dbReference type="HOGENOM" id="CLU_098240_2_0_9"/>
<dbReference type="OMA" id="PMGWTAQ"/>
<dbReference type="Proteomes" id="UP000001939">
    <property type="component" value="Chromosome"/>
</dbReference>
<dbReference type="GO" id="GO:0005829">
    <property type="term" value="C:cytosol"/>
    <property type="evidence" value="ECO:0007669"/>
    <property type="project" value="TreeGrafter"/>
</dbReference>
<dbReference type="GO" id="GO:0004518">
    <property type="term" value="F:nuclease activity"/>
    <property type="evidence" value="ECO:0007669"/>
    <property type="project" value="UniProtKB-KW"/>
</dbReference>
<dbReference type="GO" id="GO:0000967">
    <property type="term" value="P:rRNA 5'-end processing"/>
    <property type="evidence" value="ECO:0007669"/>
    <property type="project" value="UniProtKB-UniRule"/>
</dbReference>
<dbReference type="CDD" id="cd16964">
    <property type="entry name" value="YqgF"/>
    <property type="match status" value="1"/>
</dbReference>
<dbReference type="FunFam" id="3.30.420.140:FF:000003">
    <property type="entry name" value="Putative pre-16S rRNA nuclease"/>
    <property type="match status" value="1"/>
</dbReference>
<dbReference type="Gene3D" id="3.30.420.140">
    <property type="entry name" value="YqgF/RNase H-like domain"/>
    <property type="match status" value="1"/>
</dbReference>
<dbReference type="HAMAP" id="MF_00651">
    <property type="entry name" value="Nuclease_YqgF"/>
    <property type="match status" value="1"/>
</dbReference>
<dbReference type="InterPro" id="IPR012337">
    <property type="entry name" value="RNaseH-like_sf"/>
</dbReference>
<dbReference type="InterPro" id="IPR005227">
    <property type="entry name" value="YqgF"/>
</dbReference>
<dbReference type="InterPro" id="IPR006641">
    <property type="entry name" value="YqgF/RNaseH-like_dom"/>
</dbReference>
<dbReference type="InterPro" id="IPR037027">
    <property type="entry name" value="YqgF/RNaseH-like_dom_sf"/>
</dbReference>
<dbReference type="NCBIfam" id="TIGR00250">
    <property type="entry name" value="RNAse_H_YqgF"/>
    <property type="match status" value="1"/>
</dbReference>
<dbReference type="PANTHER" id="PTHR33317">
    <property type="entry name" value="POLYNUCLEOTIDYL TRANSFERASE, RIBONUCLEASE H-LIKE SUPERFAMILY PROTEIN"/>
    <property type="match status" value="1"/>
</dbReference>
<dbReference type="PANTHER" id="PTHR33317:SF4">
    <property type="entry name" value="POLYNUCLEOTIDYL TRANSFERASE, RIBONUCLEASE H-LIKE SUPERFAMILY PROTEIN"/>
    <property type="match status" value="1"/>
</dbReference>
<dbReference type="Pfam" id="PF03652">
    <property type="entry name" value="RuvX"/>
    <property type="match status" value="1"/>
</dbReference>
<dbReference type="SMART" id="SM00732">
    <property type="entry name" value="YqgFc"/>
    <property type="match status" value="1"/>
</dbReference>
<dbReference type="SUPFAM" id="SSF53098">
    <property type="entry name" value="Ribonuclease H-like"/>
    <property type="match status" value="1"/>
</dbReference>
<comment type="function">
    <text evidence="1">Could be a nuclease involved in processing of the 5'-end of pre-16S rRNA.</text>
</comment>
<comment type="subcellular location">
    <subcellularLocation>
        <location evidence="1">Cytoplasm</location>
    </subcellularLocation>
</comment>
<comment type="similarity">
    <text evidence="1">Belongs to the YqgF nuclease family.</text>
</comment>